<protein>
    <recommendedName>
        <fullName>Uxu operon transcriptional regulator</fullName>
    </recommendedName>
</protein>
<gene>
    <name type="primary">uxuR</name>
    <name type="ordered locus">b4324</name>
    <name type="ordered locus">JW4287</name>
</gene>
<keyword id="KW-0238">DNA-binding</keyword>
<keyword id="KW-1185">Reference proteome</keyword>
<keyword id="KW-0678">Repressor</keyword>
<keyword id="KW-0804">Transcription</keyword>
<keyword id="KW-0805">Transcription regulation</keyword>
<feature type="chain" id="PRO_0000050670" description="Uxu operon transcriptional regulator">
    <location>
        <begin position="1"/>
        <end position="257"/>
    </location>
</feature>
<feature type="domain" description="HTH gntR-type" evidence="1">
    <location>
        <begin position="8"/>
        <end position="76"/>
    </location>
</feature>
<feature type="DNA-binding region" description="H-T-H motif" evidence="1">
    <location>
        <begin position="36"/>
        <end position="55"/>
    </location>
</feature>
<proteinExistence type="predicted"/>
<dbReference type="EMBL" id="D13329">
    <property type="protein sequence ID" value="BAA02592.1"/>
    <property type="molecule type" value="Genomic_DNA"/>
</dbReference>
<dbReference type="EMBL" id="U14003">
    <property type="protein sequence ID" value="AAA97220.1"/>
    <property type="molecule type" value="Genomic_DNA"/>
</dbReference>
<dbReference type="EMBL" id="U00096">
    <property type="protein sequence ID" value="AAC77280.1"/>
    <property type="molecule type" value="Genomic_DNA"/>
</dbReference>
<dbReference type="EMBL" id="AP009048">
    <property type="protein sequence ID" value="BAE78317.1"/>
    <property type="molecule type" value="Genomic_DNA"/>
</dbReference>
<dbReference type="PIR" id="S56549">
    <property type="entry name" value="S56549"/>
</dbReference>
<dbReference type="RefSeq" id="NP_418744.1">
    <property type="nucleotide sequence ID" value="NC_000913.3"/>
</dbReference>
<dbReference type="RefSeq" id="WP_000833679.1">
    <property type="nucleotide sequence ID" value="NZ_SSUV01000012.1"/>
</dbReference>
<dbReference type="SMR" id="P39161"/>
<dbReference type="BioGRID" id="4261007">
    <property type="interactions" value="66"/>
</dbReference>
<dbReference type="DIP" id="DIP-11110N"/>
<dbReference type="FunCoup" id="P39161">
    <property type="interactions" value="271"/>
</dbReference>
<dbReference type="IntAct" id="P39161">
    <property type="interactions" value="2"/>
</dbReference>
<dbReference type="STRING" id="511145.b4324"/>
<dbReference type="jPOST" id="P39161"/>
<dbReference type="PaxDb" id="511145-b4324"/>
<dbReference type="EnsemblBacteria" id="AAC77280">
    <property type="protein sequence ID" value="AAC77280"/>
    <property type="gene ID" value="b4324"/>
</dbReference>
<dbReference type="GeneID" id="75202995"/>
<dbReference type="GeneID" id="948849"/>
<dbReference type="KEGG" id="ecj:JW4287"/>
<dbReference type="KEGG" id="eco:b4324"/>
<dbReference type="KEGG" id="ecoc:C3026_23365"/>
<dbReference type="PATRIC" id="fig|511145.12.peg.4466"/>
<dbReference type="EchoBASE" id="EB4151"/>
<dbReference type="eggNOG" id="COG2186">
    <property type="taxonomic scope" value="Bacteria"/>
</dbReference>
<dbReference type="HOGENOM" id="CLU_017584_9_5_6"/>
<dbReference type="InParanoid" id="P39161"/>
<dbReference type="OMA" id="YQEEGAF"/>
<dbReference type="OrthoDB" id="5450856at2"/>
<dbReference type="PhylomeDB" id="P39161"/>
<dbReference type="BioCyc" id="EcoCyc:EG20249-MONOMER"/>
<dbReference type="PRO" id="PR:P39161"/>
<dbReference type="Proteomes" id="UP000000625">
    <property type="component" value="Chromosome"/>
</dbReference>
<dbReference type="GO" id="GO:0003677">
    <property type="term" value="F:DNA binding"/>
    <property type="evidence" value="ECO:0007669"/>
    <property type="project" value="UniProtKB-KW"/>
</dbReference>
<dbReference type="GO" id="GO:0003700">
    <property type="term" value="F:DNA-binding transcription factor activity"/>
    <property type="evidence" value="ECO:0007669"/>
    <property type="project" value="InterPro"/>
</dbReference>
<dbReference type="GO" id="GO:0006351">
    <property type="term" value="P:DNA-templated transcription"/>
    <property type="evidence" value="ECO:0000270"/>
    <property type="project" value="EcoCyc"/>
</dbReference>
<dbReference type="CDD" id="cd07377">
    <property type="entry name" value="WHTH_GntR"/>
    <property type="match status" value="1"/>
</dbReference>
<dbReference type="FunFam" id="1.20.120.530:FF:000002">
    <property type="entry name" value="GntR family transcriptional regulator"/>
    <property type="match status" value="1"/>
</dbReference>
<dbReference type="Gene3D" id="1.20.120.530">
    <property type="entry name" value="GntR ligand-binding domain-like"/>
    <property type="match status" value="1"/>
</dbReference>
<dbReference type="Gene3D" id="1.10.10.10">
    <property type="entry name" value="Winged helix-like DNA-binding domain superfamily/Winged helix DNA-binding domain"/>
    <property type="match status" value="1"/>
</dbReference>
<dbReference type="InterPro" id="IPR011711">
    <property type="entry name" value="GntR_C"/>
</dbReference>
<dbReference type="InterPro" id="IPR008920">
    <property type="entry name" value="TF_FadR/GntR_C"/>
</dbReference>
<dbReference type="InterPro" id="IPR000524">
    <property type="entry name" value="Tscrpt_reg_HTH_GntR"/>
</dbReference>
<dbReference type="InterPro" id="IPR036388">
    <property type="entry name" value="WH-like_DNA-bd_sf"/>
</dbReference>
<dbReference type="InterPro" id="IPR036390">
    <property type="entry name" value="WH_DNA-bd_sf"/>
</dbReference>
<dbReference type="NCBIfam" id="NF007588">
    <property type="entry name" value="PRK10225.1"/>
    <property type="match status" value="1"/>
</dbReference>
<dbReference type="PANTHER" id="PTHR43537">
    <property type="entry name" value="TRANSCRIPTIONAL REGULATOR, GNTR FAMILY"/>
    <property type="match status" value="1"/>
</dbReference>
<dbReference type="PANTHER" id="PTHR43537:SF5">
    <property type="entry name" value="UXU OPERON TRANSCRIPTIONAL REGULATOR"/>
    <property type="match status" value="1"/>
</dbReference>
<dbReference type="Pfam" id="PF07729">
    <property type="entry name" value="FCD"/>
    <property type="match status" value="1"/>
</dbReference>
<dbReference type="Pfam" id="PF00392">
    <property type="entry name" value="GntR"/>
    <property type="match status" value="1"/>
</dbReference>
<dbReference type="PRINTS" id="PR00035">
    <property type="entry name" value="HTHGNTR"/>
</dbReference>
<dbReference type="SMART" id="SM00895">
    <property type="entry name" value="FCD"/>
    <property type="match status" value="1"/>
</dbReference>
<dbReference type="SMART" id="SM00345">
    <property type="entry name" value="HTH_GNTR"/>
    <property type="match status" value="1"/>
</dbReference>
<dbReference type="SUPFAM" id="SSF48008">
    <property type="entry name" value="GntR ligand-binding domain-like"/>
    <property type="match status" value="1"/>
</dbReference>
<dbReference type="SUPFAM" id="SSF46785">
    <property type="entry name" value="Winged helix' DNA-binding domain"/>
    <property type="match status" value="1"/>
</dbReference>
<dbReference type="PROSITE" id="PS50949">
    <property type="entry name" value="HTH_GNTR"/>
    <property type="match status" value="1"/>
</dbReference>
<evidence type="ECO:0000255" key="1">
    <source>
        <dbReference type="PROSITE-ProRule" id="PRU00307"/>
    </source>
</evidence>
<organism>
    <name type="scientific">Escherichia coli (strain K12)</name>
    <dbReference type="NCBI Taxonomy" id="83333"/>
    <lineage>
        <taxon>Bacteria</taxon>
        <taxon>Pseudomonadati</taxon>
        <taxon>Pseudomonadota</taxon>
        <taxon>Gammaproteobacteria</taxon>
        <taxon>Enterobacterales</taxon>
        <taxon>Enterobacteriaceae</taxon>
        <taxon>Escherichia</taxon>
    </lineage>
</organism>
<comment type="function">
    <text>Repressor for the uxuRBA operon.</text>
</comment>
<reference key="1">
    <citation type="submission" date="1992-09" db="EMBL/GenBank/DDBJ databases">
        <authorList>
            <person name="Mizobuchi K."/>
        </authorList>
    </citation>
    <scope>NUCLEOTIDE SEQUENCE [GENOMIC DNA]</scope>
    <source>
        <strain>K12 / W3110 / ATCC 27325 / DSM 5911</strain>
    </source>
</reference>
<reference key="2">
    <citation type="journal article" date="1995" name="Nucleic Acids Res.">
        <title>Analysis of the Escherichia coli genome VI: DNA sequence of the region from 92.8 through 100 minutes.</title>
        <authorList>
            <person name="Burland V.D."/>
            <person name="Plunkett G. III"/>
            <person name="Sofia H.J."/>
            <person name="Daniels D.L."/>
            <person name="Blattner F.R."/>
        </authorList>
    </citation>
    <scope>NUCLEOTIDE SEQUENCE [LARGE SCALE GENOMIC DNA]</scope>
    <source>
        <strain>K12 / MG1655 / ATCC 47076</strain>
    </source>
</reference>
<reference key="3">
    <citation type="journal article" date="1997" name="Science">
        <title>The complete genome sequence of Escherichia coli K-12.</title>
        <authorList>
            <person name="Blattner F.R."/>
            <person name="Plunkett G. III"/>
            <person name="Bloch C.A."/>
            <person name="Perna N.T."/>
            <person name="Burland V."/>
            <person name="Riley M."/>
            <person name="Collado-Vides J."/>
            <person name="Glasner J.D."/>
            <person name="Rode C.K."/>
            <person name="Mayhew G.F."/>
            <person name="Gregor J."/>
            <person name="Davis N.W."/>
            <person name="Kirkpatrick H.A."/>
            <person name="Goeden M.A."/>
            <person name="Rose D.J."/>
            <person name="Mau B."/>
            <person name="Shao Y."/>
        </authorList>
    </citation>
    <scope>NUCLEOTIDE SEQUENCE [LARGE SCALE GENOMIC DNA]</scope>
    <source>
        <strain>K12 / MG1655 / ATCC 47076</strain>
    </source>
</reference>
<reference key="4">
    <citation type="journal article" date="2006" name="Mol. Syst. Biol.">
        <title>Highly accurate genome sequences of Escherichia coli K-12 strains MG1655 and W3110.</title>
        <authorList>
            <person name="Hayashi K."/>
            <person name="Morooka N."/>
            <person name="Yamamoto Y."/>
            <person name="Fujita K."/>
            <person name="Isono K."/>
            <person name="Choi S."/>
            <person name="Ohtsubo E."/>
            <person name="Baba T."/>
            <person name="Wanner B.L."/>
            <person name="Mori H."/>
            <person name="Horiuchi T."/>
        </authorList>
    </citation>
    <scope>NUCLEOTIDE SEQUENCE [LARGE SCALE GENOMIC DNA]</scope>
    <source>
        <strain>K12 / W3110 / ATCC 27325 / DSM 5911</strain>
    </source>
</reference>
<name>UXUR_ECOLI</name>
<sequence>MKSATSAQRPYQEVGAMIRDLIIKTPYNPGERLPPEREIAEMLDVTRTVVREALIMLEIKGLVEVRRGAGIYVLDNSGSQNTDSPDANVCNDAGPFELLQARQLLESNIAEFAALQATREDIVKMRQALQLEERELASSAPGSSESGDMQFHLAIAEATHNSMLVELFRQSWQWRENNPMWIQLHSHLDDSLYRKEWLGDHKQILAALIKKDARAAKLAMWQHLENVKQRLLEFSNVDDIYFDGYLFDSWPLDKVDA</sequence>
<accession>P39161</accession>
<accession>Q2M5Y9</accession>